<reference key="1">
    <citation type="submission" date="2003-01" db="EMBL/GenBank/DDBJ databases">
        <authorList>
            <consortium name="NIH - Xenopus Gene Collection (XGC) project"/>
        </authorList>
    </citation>
    <scope>NUCLEOTIDE SEQUENCE [LARGE SCALE MRNA]</scope>
    <source>
        <tissue>Embryo</tissue>
    </source>
</reference>
<gene>
    <name type="primary">prps2</name>
</gene>
<keyword id="KW-0067">ATP-binding</keyword>
<keyword id="KW-0418">Kinase</keyword>
<keyword id="KW-0460">Magnesium</keyword>
<keyword id="KW-0479">Metal-binding</keyword>
<keyword id="KW-0545">Nucleotide biosynthesis</keyword>
<keyword id="KW-0547">Nucleotide-binding</keyword>
<keyword id="KW-1185">Reference proteome</keyword>
<keyword id="KW-0808">Transferase</keyword>
<feature type="initiator methionine" description="Removed" evidence="1">
    <location>
        <position position="1"/>
    </location>
</feature>
<feature type="chain" id="PRO_0000294083" description="Ribose-phosphate pyrophosphokinase 2">
    <location>
        <begin position="2"/>
        <end position="318"/>
    </location>
</feature>
<feature type="region of interest" description="Binding of phosphoribosylpyrophosphate" evidence="2">
    <location>
        <begin position="212"/>
        <end position="227"/>
    </location>
</feature>
<feature type="binding site" evidence="1">
    <location>
        <begin position="96"/>
        <end position="101"/>
    </location>
    <ligand>
        <name>ATP</name>
        <dbReference type="ChEBI" id="CHEBI:30616"/>
    </ligand>
</feature>
<feature type="binding site" evidence="2">
    <location>
        <position position="128"/>
    </location>
    <ligand>
        <name>Mg(2+)</name>
        <dbReference type="ChEBI" id="CHEBI:18420"/>
    </ligand>
</feature>
<feature type="binding site" evidence="1">
    <location>
        <position position="130"/>
    </location>
    <ligand>
        <name>ATP</name>
        <dbReference type="ChEBI" id="CHEBI:30616"/>
    </ligand>
</feature>
<feature type="binding site" evidence="2">
    <location>
        <position position="130"/>
    </location>
    <ligand>
        <name>Mg(2+)</name>
        <dbReference type="ChEBI" id="CHEBI:18420"/>
    </ligand>
</feature>
<feature type="binding site" evidence="2">
    <location>
        <position position="139"/>
    </location>
    <ligand>
        <name>Mg(2+)</name>
        <dbReference type="ChEBI" id="CHEBI:18420"/>
    </ligand>
</feature>
<feature type="binding site" evidence="2">
    <location>
        <position position="143"/>
    </location>
    <ligand>
        <name>Mg(2+)</name>
        <dbReference type="ChEBI" id="CHEBI:18420"/>
    </ligand>
</feature>
<evidence type="ECO:0000250" key="1"/>
<evidence type="ECO:0000255" key="2"/>
<evidence type="ECO:0000305" key="3"/>
<organism>
    <name type="scientific">Xenopus laevis</name>
    <name type="common">African clawed frog</name>
    <dbReference type="NCBI Taxonomy" id="8355"/>
    <lineage>
        <taxon>Eukaryota</taxon>
        <taxon>Metazoa</taxon>
        <taxon>Chordata</taxon>
        <taxon>Craniata</taxon>
        <taxon>Vertebrata</taxon>
        <taxon>Euteleostomi</taxon>
        <taxon>Amphibia</taxon>
        <taxon>Batrachia</taxon>
        <taxon>Anura</taxon>
        <taxon>Pipoidea</taxon>
        <taxon>Pipidae</taxon>
        <taxon>Xenopodinae</taxon>
        <taxon>Xenopus</taxon>
        <taxon>Xenopus</taxon>
    </lineage>
</organism>
<accession>Q7ZXC9</accession>
<sequence>MPNIVLFSGSSHQDLSQKVAERLGLELGKVVTKKFSNQETSVEIGESVRGEDVYIIQSGCGEINDNLMELLIMINACKIASSSRVTAVIPCFPYARQDKKDKSRAPISAKLVANMLSVAGADHIITMDLHASQIQGFFDIPVDNLYAEPAVLQWIRENIPEWKNSSIVSPDAGGAKRVTSIADRLNVEFALIHKERKKANEVDRMVLVGDVKDRVAILVDDMADTCGTVCHAADKLLSAGATKVYAILTHGIFSGPAISRINNAAFEAVVVTNTIPQDEKMKQCSKIQVIDISMILAEAIRRTHNGESVSYLFSHVPL</sequence>
<comment type="function">
    <text>Catalyzes the synthesis of phosphoribosylpyrophosphate (PRPP) that is essential for nucleotide synthesis.</text>
</comment>
<comment type="catalytic activity">
    <reaction>
        <text>D-ribose 5-phosphate + ATP = 5-phospho-alpha-D-ribose 1-diphosphate + AMP + H(+)</text>
        <dbReference type="Rhea" id="RHEA:15609"/>
        <dbReference type="ChEBI" id="CHEBI:15378"/>
        <dbReference type="ChEBI" id="CHEBI:30616"/>
        <dbReference type="ChEBI" id="CHEBI:58017"/>
        <dbReference type="ChEBI" id="CHEBI:78346"/>
        <dbReference type="ChEBI" id="CHEBI:456215"/>
        <dbReference type="EC" id="2.7.6.1"/>
    </reaction>
</comment>
<comment type="cofactor">
    <cofactor evidence="1">
        <name>Mg(2+)</name>
        <dbReference type="ChEBI" id="CHEBI:18420"/>
    </cofactor>
</comment>
<comment type="activity regulation">
    <text evidence="1">Activated by magnesium and inorganic phosphate. Competitively or non-competitively inhibited by ADP, 2,3-bisphosphoglyceride or GDP (By similarity).</text>
</comment>
<comment type="pathway">
    <text>Metabolic intermediate biosynthesis; 5-phospho-alpha-D-ribose 1-diphosphate biosynthesis; 5-phospho-alpha-D-ribose 1-diphosphate from D-ribose 5-phosphate (route I): step 1/1.</text>
</comment>
<comment type="subunit">
    <text evidence="1">Homodimer. The active form is probably a hexamer composed of 3 homodimers (By similarity).</text>
</comment>
<comment type="similarity">
    <text evidence="3">Belongs to the ribose-phosphate pyrophosphokinase family.</text>
</comment>
<protein>
    <recommendedName>
        <fullName>Ribose-phosphate pyrophosphokinase 2</fullName>
        <ecNumber>2.7.6.1</ecNumber>
    </recommendedName>
    <alternativeName>
        <fullName>Phosphoribosyl pyrophosphate synthase II</fullName>
        <shortName>PRS-II</shortName>
    </alternativeName>
</protein>
<proteinExistence type="evidence at transcript level"/>
<dbReference type="EC" id="2.7.6.1"/>
<dbReference type="EMBL" id="BC045049">
    <property type="protein sequence ID" value="AAH45049.1"/>
    <property type="molecule type" value="mRNA"/>
</dbReference>
<dbReference type="RefSeq" id="NP_001080655.1">
    <property type="nucleotide sequence ID" value="NM_001087186.1"/>
</dbReference>
<dbReference type="SMR" id="Q7ZXC9"/>
<dbReference type="BioGRID" id="98589">
    <property type="interactions" value="1"/>
</dbReference>
<dbReference type="DNASU" id="380347"/>
<dbReference type="GeneID" id="380347"/>
<dbReference type="KEGG" id="xla:380347"/>
<dbReference type="AGR" id="Xenbase:XB-GENE-983991"/>
<dbReference type="CTD" id="380347"/>
<dbReference type="Xenbase" id="XB-GENE-983991">
    <property type="gene designation" value="prps2.L"/>
</dbReference>
<dbReference type="OMA" id="DNLWTEP"/>
<dbReference type="OrthoDB" id="413572at2759"/>
<dbReference type="UniPathway" id="UPA00087">
    <property type="reaction ID" value="UER00172"/>
</dbReference>
<dbReference type="CD-CODE" id="78E86D56">
    <property type="entry name" value="Mitochondrial cloud"/>
</dbReference>
<dbReference type="Proteomes" id="UP000186698">
    <property type="component" value="Chromosome 2L"/>
</dbReference>
<dbReference type="Bgee" id="380347">
    <property type="expression patterns" value="Expressed in blastula and 19 other cell types or tissues"/>
</dbReference>
<dbReference type="GO" id="GO:0005737">
    <property type="term" value="C:cytoplasm"/>
    <property type="evidence" value="ECO:0000318"/>
    <property type="project" value="GO_Central"/>
</dbReference>
<dbReference type="GO" id="GO:0002189">
    <property type="term" value="C:ribose phosphate diphosphokinase complex"/>
    <property type="evidence" value="ECO:0007669"/>
    <property type="project" value="TreeGrafter"/>
</dbReference>
<dbReference type="GO" id="GO:0005524">
    <property type="term" value="F:ATP binding"/>
    <property type="evidence" value="ECO:0000250"/>
    <property type="project" value="UniProtKB"/>
</dbReference>
<dbReference type="GO" id="GO:0016301">
    <property type="term" value="F:kinase activity"/>
    <property type="evidence" value="ECO:0007669"/>
    <property type="project" value="UniProtKB-KW"/>
</dbReference>
<dbReference type="GO" id="GO:0000287">
    <property type="term" value="F:magnesium ion binding"/>
    <property type="evidence" value="ECO:0007669"/>
    <property type="project" value="InterPro"/>
</dbReference>
<dbReference type="GO" id="GO:0042803">
    <property type="term" value="F:protein homodimerization activity"/>
    <property type="evidence" value="ECO:0000250"/>
    <property type="project" value="UniProtKB"/>
</dbReference>
<dbReference type="GO" id="GO:0004749">
    <property type="term" value="F:ribose phosphate diphosphokinase activity"/>
    <property type="evidence" value="ECO:0000250"/>
    <property type="project" value="UniProtKB"/>
</dbReference>
<dbReference type="GO" id="GO:0006015">
    <property type="term" value="P:5-phosphoribose 1-diphosphate biosynthetic process"/>
    <property type="evidence" value="ECO:0000318"/>
    <property type="project" value="GO_Central"/>
</dbReference>
<dbReference type="GO" id="GO:0006164">
    <property type="term" value="P:purine nucleotide biosynthetic process"/>
    <property type="evidence" value="ECO:0000318"/>
    <property type="project" value="GO_Central"/>
</dbReference>
<dbReference type="GO" id="GO:0009156">
    <property type="term" value="P:ribonucleoside monophosphate biosynthetic process"/>
    <property type="evidence" value="ECO:0007669"/>
    <property type="project" value="InterPro"/>
</dbReference>
<dbReference type="CDD" id="cd06223">
    <property type="entry name" value="PRTases_typeI"/>
    <property type="match status" value="1"/>
</dbReference>
<dbReference type="FunFam" id="3.40.50.2020:FF:000031">
    <property type="entry name" value="Probable PRS4-ribose-phosphate pyrophosphokinase 3"/>
    <property type="match status" value="1"/>
</dbReference>
<dbReference type="FunFam" id="3.40.50.2020:FF:000005">
    <property type="entry name" value="Ribose-phosphate pyrophosphokinase 1"/>
    <property type="match status" value="1"/>
</dbReference>
<dbReference type="Gene3D" id="3.40.50.2020">
    <property type="match status" value="2"/>
</dbReference>
<dbReference type="HAMAP" id="MF_00583_B">
    <property type="entry name" value="RibP_PPkinase_B"/>
    <property type="match status" value="1"/>
</dbReference>
<dbReference type="InterPro" id="IPR000842">
    <property type="entry name" value="PRib_PP_synth_CS"/>
</dbReference>
<dbReference type="InterPro" id="IPR029099">
    <property type="entry name" value="Pribosyltran_N"/>
</dbReference>
<dbReference type="InterPro" id="IPR000836">
    <property type="entry name" value="PRibTrfase_dom"/>
</dbReference>
<dbReference type="InterPro" id="IPR029057">
    <property type="entry name" value="PRTase-like"/>
</dbReference>
<dbReference type="InterPro" id="IPR005946">
    <property type="entry name" value="Rib-P_diPkinase"/>
</dbReference>
<dbReference type="InterPro" id="IPR037515">
    <property type="entry name" value="Rib-P_diPkinase_bac"/>
</dbReference>
<dbReference type="NCBIfam" id="NF002320">
    <property type="entry name" value="PRK01259.1"/>
    <property type="match status" value="1"/>
</dbReference>
<dbReference type="NCBIfam" id="TIGR01251">
    <property type="entry name" value="ribP_PPkin"/>
    <property type="match status" value="1"/>
</dbReference>
<dbReference type="PANTHER" id="PTHR10210">
    <property type="entry name" value="RIBOSE-PHOSPHATE DIPHOSPHOKINASE FAMILY MEMBER"/>
    <property type="match status" value="1"/>
</dbReference>
<dbReference type="PANTHER" id="PTHR10210:SF32">
    <property type="entry name" value="RIBOSE-PHOSPHATE PYROPHOSPHOKINASE 2"/>
    <property type="match status" value="1"/>
</dbReference>
<dbReference type="Pfam" id="PF14572">
    <property type="entry name" value="Pribosyl_synth"/>
    <property type="match status" value="1"/>
</dbReference>
<dbReference type="Pfam" id="PF13793">
    <property type="entry name" value="Pribosyltran_N"/>
    <property type="match status" value="1"/>
</dbReference>
<dbReference type="SMART" id="SM01400">
    <property type="entry name" value="Pribosyltran_N"/>
    <property type="match status" value="1"/>
</dbReference>
<dbReference type="SUPFAM" id="SSF53271">
    <property type="entry name" value="PRTase-like"/>
    <property type="match status" value="1"/>
</dbReference>
<dbReference type="PROSITE" id="PS00114">
    <property type="entry name" value="PRPP_SYNTHASE"/>
    <property type="match status" value="1"/>
</dbReference>
<name>PRPS2_XENLA</name>